<sequence length="305" mass="33510">MLKQRTIKSIVKTVGIGLHSGRKVELTLRPAAPGTGIVFSRVDLPTPVDIPASAMSIGDTRLASVLQKDGARVSTVEHLMSACAGLGIDNLYVDVTAEEIPIMDGSAASFVFLIQSAGIEEQNAPKRFIKVTKPVEIRDGDKFARLEPYFGFKLKFTIDFRHPAVDKTGQELEVDFANTSYVREIARARTFGFAHEVEMMRELGLARGGSMDNAIVLDEYRILNNDGLRYDDEFVKHKMLDAIGDLYVVGHPLLASYTAYKSGHGLNNALLRELLAHEDAYEIVTFDDPQAAPKGFAFDAQTAFA</sequence>
<accession>Q0BIJ4</accession>
<feature type="chain" id="PRO_1000013191" description="UDP-3-O-acyl-N-acetylglucosamine deacetylase">
    <location>
        <begin position="1"/>
        <end position="305"/>
    </location>
</feature>
<feature type="active site" description="Proton donor" evidence="1">
    <location>
        <position position="264"/>
    </location>
</feature>
<feature type="binding site" evidence="1">
    <location>
        <position position="78"/>
    </location>
    <ligand>
        <name>Zn(2+)</name>
        <dbReference type="ChEBI" id="CHEBI:29105"/>
    </ligand>
</feature>
<feature type="binding site" evidence="1">
    <location>
        <position position="237"/>
    </location>
    <ligand>
        <name>Zn(2+)</name>
        <dbReference type="ChEBI" id="CHEBI:29105"/>
    </ligand>
</feature>
<feature type="binding site" evidence="1">
    <location>
        <position position="241"/>
    </location>
    <ligand>
        <name>Zn(2+)</name>
        <dbReference type="ChEBI" id="CHEBI:29105"/>
    </ligand>
</feature>
<name>LPXC_BURCM</name>
<dbReference type="EC" id="3.5.1.108" evidence="1"/>
<dbReference type="EMBL" id="CP000440">
    <property type="protein sequence ID" value="ABI86029.1"/>
    <property type="molecule type" value="Genomic_DNA"/>
</dbReference>
<dbReference type="RefSeq" id="WP_006756824.1">
    <property type="nucleotide sequence ID" value="NZ_CP009798.1"/>
</dbReference>
<dbReference type="SMR" id="Q0BIJ4"/>
<dbReference type="GeneID" id="93084113"/>
<dbReference type="KEGG" id="bam:Bamb_0470"/>
<dbReference type="PATRIC" id="fig|339670.21.peg.1136"/>
<dbReference type="eggNOG" id="COG0774">
    <property type="taxonomic scope" value="Bacteria"/>
</dbReference>
<dbReference type="UniPathway" id="UPA00359">
    <property type="reaction ID" value="UER00478"/>
</dbReference>
<dbReference type="Proteomes" id="UP000000662">
    <property type="component" value="Chromosome 1"/>
</dbReference>
<dbReference type="GO" id="GO:0016020">
    <property type="term" value="C:membrane"/>
    <property type="evidence" value="ECO:0007669"/>
    <property type="project" value="GOC"/>
</dbReference>
<dbReference type="GO" id="GO:0046872">
    <property type="term" value="F:metal ion binding"/>
    <property type="evidence" value="ECO:0007669"/>
    <property type="project" value="UniProtKB-KW"/>
</dbReference>
<dbReference type="GO" id="GO:0103117">
    <property type="term" value="F:UDP-3-O-acyl-N-acetylglucosamine deacetylase activity"/>
    <property type="evidence" value="ECO:0007669"/>
    <property type="project" value="UniProtKB-UniRule"/>
</dbReference>
<dbReference type="GO" id="GO:0009245">
    <property type="term" value="P:lipid A biosynthetic process"/>
    <property type="evidence" value="ECO:0007669"/>
    <property type="project" value="UniProtKB-UniRule"/>
</dbReference>
<dbReference type="Gene3D" id="3.30.230.20">
    <property type="entry name" value="lpxc deacetylase, domain 1"/>
    <property type="match status" value="1"/>
</dbReference>
<dbReference type="Gene3D" id="3.30.1700.10">
    <property type="entry name" value="lpxc deacetylase, domain 2"/>
    <property type="match status" value="1"/>
</dbReference>
<dbReference type="HAMAP" id="MF_00388">
    <property type="entry name" value="LpxC"/>
    <property type="match status" value="1"/>
</dbReference>
<dbReference type="InterPro" id="IPR020568">
    <property type="entry name" value="Ribosomal_Su5_D2-typ_SF"/>
</dbReference>
<dbReference type="InterPro" id="IPR004463">
    <property type="entry name" value="UDP-acyl_GlcNac_deAcase"/>
</dbReference>
<dbReference type="InterPro" id="IPR011334">
    <property type="entry name" value="UDP-acyl_GlcNac_deAcase_C"/>
</dbReference>
<dbReference type="InterPro" id="IPR015870">
    <property type="entry name" value="UDP-acyl_N-AcGlcN_deAcase_N"/>
</dbReference>
<dbReference type="NCBIfam" id="TIGR00325">
    <property type="entry name" value="lpxC"/>
    <property type="match status" value="1"/>
</dbReference>
<dbReference type="PANTHER" id="PTHR33694">
    <property type="entry name" value="UDP-3-O-ACYL-N-ACETYLGLUCOSAMINE DEACETYLASE 1, MITOCHONDRIAL-RELATED"/>
    <property type="match status" value="1"/>
</dbReference>
<dbReference type="PANTHER" id="PTHR33694:SF1">
    <property type="entry name" value="UDP-3-O-ACYL-N-ACETYLGLUCOSAMINE DEACETYLASE 1, MITOCHONDRIAL-RELATED"/>
    <property type="match status" value="1"/>
</dbReference>
<dbReference type="Pfam" id="PF03331">
    <property type="entry name" value="LpxC"/>
    <property type="match status" value="1"/>
</dbReference>
<dbReference type="SUPFAM" id="SSF54211">
    <property type="entry name" value="Ribosomal protein S5 domain 2-like"/>
    <property type="match status" value="2"/>
</dbReference>
<organism>
    <name type="scientific">Burkholderia ambifaria (strain ATCC BAA-244 / DSM 16087 / CCUG 44356 / LMG 19182 / AMMD)</name>
    <name type="common">Burkholderia cepacia (strain AMMD)</name>
    <dbReference type="NCBI Taxonomy" id="339670"/>
    <lineage>
        <taxon>Bacteria</taxon>
        <taxon>Pseudomonadati</taxon>
        <taxon>Pseudomonadota</taxon>
        <taxon>Betaproteobacteria</taxon>
        <taxon>Burkholderiales</taxon>
        <taxon>Burkholderiaceae</taxon>
        <taxon>Burkholderia</taxon>
        <taxon>Burkholderia cepacia complex</taxon>
    </lineage>
</organism>
<gene>
    <name evidence="1" type="primary">lpxC</name>
    <name type="ordered locus">Bamb_0470</name>
</gene>
<comment type="function">
    <text evidence="1">Catalyzes the hydrolysis of UDP-3-O-myristoyl-N-acetylglucosamine to form UDP-3-O-myristoylglucosamine and acetate, the committed step in lipid A biosynthesis.</text>
</comment>
<comment type="catalytic activity">
    <reaction evidence="1">
        <text>a UDP-3-O-[(3R)-3-hydroxyacyl]-N-acetyl-alpha-D-glucosamine + H2O = a UDP-3-O-[(3R)-3-hydroxyacyl]-alpha-D-glucosamine + acetate</text>
        <dbReference type="Rhea" id="RHEA:67816"/>
        <dbReference type="ChEBI" id="CHEBI:15377"/>
        <dbReference type="ChEBI" id="CHEBI:30089"/>
        <dbReference type="ChEBI" id="CHEBI:137740"/>
        <dbReference type="ChEBI" id="CHEBI:173225"/>
        <dbReference type="EC" id="3.5.1.108"/>
    </reaction>
</comment>
<comment type="cofactor">
    <cofactor evidence="1">
        <name>Zn(2+)</name>
        <dbReference type="ChEBI" id="CHEBI:29105"/>
    </cofactor>
</comment>
<comment type="pathway">
    <text evidence="1">Glycolipid biosynthesis; lipid IV(A) biosynthesis; lipid IV(A) from (3R)-3-hydroxytetradecanoyl-[acyl-carrier-protein] and UDP-N-acetyl-alpha-D-glucosamine: step 2/6.</text>
</comment>
<comment type="similarity">
    <text evidence="1">Belongs to the LpxC family.</text>
</comment>
<proteinExistence type="inferred from homology"/>
<evidence type="ECO:0000255" key="1">
    <source>
        <dbReference type="HAMAP-Rule" id="MF_00388"/>
    </source>
</evidence>
<keyword id="KW-0378">Hydrolase</keyword>
<keyword id="KW-0441">Lipid A biosynthesis</keyword>
<keyword id="KW-0444">Lipid biosynthesis</keyword>
<keyword id="KW-0443">Lipid metabolism</keyword>
<keyword id="KW-0479">Metal-binding</keyword>
<keyword id="KW-0862">Zinc</keyword>
<reference key="1">
    <citation type="submission" date="2006-08" db="EMBL/GenBank/DDBJ databases">
        <title>Complete sequence of chromosome 1 of Burkholderia cepacia AMMD.</title>
        <authorList>
            <person name="Copeland A."/>
            <person name="Lucas S."/>
            <person name="Lapidus A."/>
            <person name="Barry K."/>
            <person name="Detter J.C."/>
            <person name="Glavina del Rio T."/>
            <person name="Hammon N."/>
            <person name="Israni S."/>
            <person name="Pitluck S."/>
            <person name="Bruce D."/>
            <person name="Chain P."/>
            <person name="Malfatti S."/>
            <person name="Shin M."/>
            <person name="Vergez L."/>
            <person name="Schmutz J."/>
            <person name="Larimer F."/>
            <person name="Land M."/>
            <person name="Hauser L."/>
            <person name="Kyrpides N."/>
            <person name="Kim E."/>
            <person name="Parke J."/>
            <person name="Coenye T."/>
            <person name="Konstantinidis K."/>
            <person name="Ramette A."/>
            <person name="Tiedje J."/>
            <person name="Richardson P."/>
        </authorList>
    </citation>
    <scope>NUCLEOTIDE SEQUENCE [LARGE SCALE GENOMIC DNA]</scope>
    <source>
        <strain>ATCC BAA-244 / DSM 16087 / CCUG 44356 / LMG 19182 / AMMD</strain>
    </source>
</reference>
<protein>
    <recommendedName>
        <fullName evidence="1">UDP-3-O-acyl-N-acetylglucosamine deacetylase</fullName>
        <shortName evidence="1">UDP-3-O-acyl-GlcNAc deacetylase</shortName>
        <ecNumber evidence="1">3.5.1.108</ecNumber>
    </recommendedName>
    <alternativeName>
        <fullName evidence="1">UDP-3-O-[R-3-hydroxymyristoyl]-N-acetylglucosamine deacetylase</fullName>
    </alternativeName>
</protein>